<organism>
    <name type="scientific">Salmonella paratyphi C (strain RKS4594)</name>
    <dbReference type="NCBI Taxonomy" id="476213"/>
    <lineage>
        <taxon>Bacteria</taxon>
        <taxon>Pseudomonadati</taxon>
        <taxon>Pseudomonadota</taxon>
        <taxon>Gammaproteobacteria</taxon>
        <taxon>Enterobacterales</taxon>
        <taxon>Enterobacteriaceae</taxon>
        <taxon>Salmonella</taxon>
    </lineage>
</organism>
<feature type="chain" id="PRO_1000124259" description="Inner membrane-spanning protein YciB">
    <location>
        <begin position="1"/>
        <end position="179"/>
    </location>
</feature>
<feature type="transmembrane region" description="Helical" evidence="1">
    <location>
        <begin position="22"/>
        <end position="42"/>
    </location>
</feature>
<feature type="transmembrane region" description="Helical" evidence="1">
    <location>
        <begin position="50"/>
        <end position="70"/>
    </location>
</feature>
<feature type="transmembrane region" description="Helical" evidence="1">
    <location>
        <begin position="76"/>
        <end position="96"/>
    </location>
</feature>
<feature type="transmembrane region" description="Helical" evidence="1">
    <location>
        <begin position="121"/>
        <end position="141"/>
    </location>
</feature>
<feature type="transmembrane region" description="Helical" evidence="1">
    <location>
        <begin position="149"/>
        <end position="169"/>
    </location>
</feature>
<protein>
    <recommendedName>
        <fullName evidence="1">Inner membrane-spanning protein YciB</fullName>
    </recommendedName>
</protein>
<dbReference type="EMBL" id="CP000857">
    <property type="protein sequence ID" value="ACN46130.1"/>
    <property type="molecule type" value="Genomic_DNA"/>
</dbReference>
<dbReference type="RefSeq" id="WP_000808682.1">
    <property type="nucleotide sequence ID" value="NC_012125.1"/>
</dbReference>
<dbReference type="KEGG" id="sei:SPC_1994"/>
<dbReference type="HOGENOM" id="CLU_089554_2_0_6"/>
<dbReference type="Proteomes" id="UP000001599">
    <property type="component" value="Chromosome"/>
</dbReference>
<dbReference type="GO" id="GO:0005886">
    <property type="term" value="C:plasma membrane"/>
    <property type="evidence" value="ECO:0007669"/>
    <property type="project" value="UniProtKB-SubCell"/>
</dbReference>
<dbReference type="HAMAP" id="MF_00189">
    <property type="entry name" value="YciB"/>
    <property type="match status" value="1"/>
</dbReference>
<dbReference type="InterPro" id="IPR006008">
    <property type="entry name" value="YciB"/>
</dbReference>
<dbReference type="NCBIfam" id="TIGR00997">
    <property type="entry name" value="ispZ"/>
    <property type="match status" value="1"/>
</dbReference>
<dbReference type="NCBIfam" id="NF001324">
    <property type="entry name" value="PRK00259.1-2"/>
    <property type="match status" value="1"/>
</dbReference>
<dbReference type="NCBIfam" id="NF001325">
    <property type="entry name" value="PRK00259.1-3"/>
    <property type="match status" value="1"/>
</dbReference>
<dbReference type="NCBIfam" id="NF001326">
    <property type="entry name" value="PRK00259.1-4"/>
    <property type="match status" value="1"/>
</dbReference>
<dbReference type="PANTHER" id="PTHR36917:SF1">
    <property type="entry name" value="INNER MEMBRANE-SPANNING PROTEIN YCIB"/>
    <property type="match status" value="1"/>
</dbReference>
<dbReference type="PANTHER" id="PTHR36917">
    <property type="entry name" value="INTRACELLULAR SEPTATION PROTEIN A-RELATED"/>
    <property type="match status" value="1"/>
</dbReference>
<dbReference type="Pfam" id="PF04279">
    <property type="entry name" value="IspA"/>
    <property type="match status" value="1"/>
</dbReference>
<sequence length="179" mass="20763">MKQFLDFLPLVVFFAFYKLYDIYAATSALIVATAIVLIYSWVRYRKIEKMALITFVLVAVFGGLTLFFHNDEFIKWKVTVIYALFAGALLISQWVMKKPLIQRMLGKELALPQQVWSKLNLAWALFFIACGLANIYIAFWLPQNIWVNFKVFGLTALTLIFTLLSGVYIYRHLPQEDKS</sequence>
<reference key="1">
    <citation type="journal article" date="2009" name="PLoS ONE">
        <title>Salmonella paratyphi C: genetic divergence from Salmonella choleraesuis and pathogenic convergence with Salmonella typhi.</title>
        <authorList>
            <person name="Liu W.-Q."/>
            <person name="Feng Y."/>
            <person name="Wang Y."/>
            <person name="Zou Q.-H."/>
            <person name="Chen F."/>
            <person name="Guo J.-T."/>
            <person name="Peng Y.-H."/>
            <person name="Jin Y."/>
            <person name="Li Y.-G."/>
            <person name="Hu S.-N."/>
            <person name="Johnston R.N."/>
            <person name="Liu G.-R."/>
            <person name="Liu S.-L."/>
        </authorList>
    </citation>
    <scope>NUCLEOTIDE SEQUENCE [LARGE SCALE GENOMIC DNA]</scope>
    <source>
        <strain>RKS4594</strain>
    </source>
</reference>
<comment type="function">
    <text evidence="1">Plays a role in cell envelope biogenesis, maintenance of cell envelope integrity and membrane homeostasis.</text>
</comment>
<comment type="subcellular location">
    <subcellularLocation>
        <location evidence="1">Cell inner membrane</location>
        <topology evidence="1">Multi-pass membrane protein</topology>
    </subcellularLocation>
</comment>
<comment type="similarity">
    <text evidence="1">Belongs to the YciB family.</text>
</comment>
<name>YCIB_SALPC</name>
<keyword id="KW-0997">Cell inner membrane</keyword>
<keyword id="KW-1003">Cell membrane</keyword>
<keyword id="KW-0472">Membrane</keyword>
<keyword id="KW-0812">Transmembrane</keyword>
<keyword id="KW-1133">Transmembrane helix</keyword>
<proteinExistence type="inferred from homology"/>
<evidence type="ECO:0000255" key="1">
    <source>
        <dbReference type="HAMAP-Rule" id="MF_00189"/>
    </source>
</evidence>
<gene>
    <name evidence="1" type="primary">yciB</name>
    <name type="ordered locus">SPC_1994</name>
</gene>
<accession>C0Q398</accession>